<dbReference type="EC" id="2.5.1.61" evidence="1"/>
<dbReference type="EMBL" id="AE015451">
    <property type="protein sequence ID" value="AAN65819.1"/>
    <property type="molecule type" value="Genomic_DNA"/>
</dbReference>
<dbReference type="RefSeq" id="NP_742355.1">
    <property type="nucleotide sequence ID" value="NC_002947.4"/>
</dbReference>
<dbReference type="RefSeq" id="WP_003255895.1">
    <property type="nucleotide sequence ID" value="NZ_CP169744.1"/>
</dbReference>
<dbReference type="SMR" id="Q88RE5"/>
<dbReference type="STRING" id="160488.PP_0186"/>
<dbReference type="PaxDb" id="160488-PP_0186"/>
<dbReference type="GeneID" id="83677444"/>
<dbReference type="KEGG" id="ppu:PP_0186"/>
<dbReference type="PATRIC" id="fig|160488.4.peg.196"/>
<dbReference type="eggNOG" id="COG0181">
    <property type="taxonomic scope" value="Bacteria"/>
</dbReference>
<dbReference type="HOGENOM" id="CLU_019704_0_2_6"/>
<dbReference type="OrthoDB" id="9810298at2"/>
<dbReference type="PhylomeDB" id="Q88RE5"/>
<dbReference type="BioCyc" id="PPUT160488:G1G01-204-MONOMER"/>
<dbReference type="UniPathway" id="UPA00251">
    <property type="reaction ID" value="UER00319"/>
</dbReference>
<dbReference type="Proteomes" id="UP000000556">
    <property type="component" value="Chromosome"/>
</dbReference>
<dbReference type="GO" id="GO:0005737">
    <property type="term" value="C:cytoplasm"/>
    <property type="evidence" value="ECO:0007669"/>
    <property type="project" value="TreeGrafter"/>
</dbReference>
<dbReference type="GO" id="GO:0004418">
    <property type="term" value="F:hydroxymethylbilane synthase activity"/>
    <property type="evidence" value="ECO:0007669"/>
    <property type="project" value="UniProtKB-UniRule"/>
</dbReference>
<dbReference type="GO" id="GO:0006782">
    <property type="term" value="P:protoporphyrinogen IX biosynthetic process"/>
    <property type="evidence" value="ECO:0007669"/>
    <property type="project" value="UniProtKB-UniRule"/>
</dbReference>
<dbReference type="CDD" id="cd13646">
    <property type="entry name" value="PBP2_EcHMBS_like"/>
    <property type="match status" value="1"/>
</dbReference>
<dbReference type="FunFam" id="3.30.160.40:FF:000002">
    <property type="entry name" value="Porphobilinogen deaminase"/>
    <property type="match status" value="1"/>
</dbReference>
<dbReference type="FunFam" id="3.40.190.10:FF:000004">
    <property type="entry name" value="Porphobilinogen deaminase"/>
    <property type="match status" value="1"/>
</dbReference>
<dbReference type="FunFam" id="3.40.190.10:FF:000005">
    <property type="entry name" value="Porphobilinogen deaminase"/>
    <property type="match status" value="1"/>
</dbReference>
<dbReference type="Gene3D" id="3.40.190.10">
    <property type="entry name" value="Periplasmic binding protein-like II"/>
    <property type="match status" value="2"/>
</dbReference>
<dbReference type="Gene3D" id="3.30.160.40">
    <property type="entry name" value="Porphobilinogen deaminase, C-terminal domain"/>
    <property type="match status" value="1"/>
</dbReference>
<dbReference type="HAMAP" id="MF_00260">
    <property type="entry name" value="Porphobil_deam"/>
    <property type="match status" value="1"/>
</dbReference>
<dbReference type="InterPro" id="IPR000860">
    <property type="entry name" value="HemC"/>
</dbReference>
<dbReference type="InterPro" id="IPR022419">
    <property type="entry name" value="Porphobilin_deaminase_cofac_BS"/>
</dbReference>
<dbReference type="InterPro" id="IPR022417">
    <property type="entry name" value="Porphobilin_deaminase_N"/>
</dbReference>
<dbReference type="InterPro" id="IPR022418">
    <property type="entry name" value="Porphobilinogen_deaminase_C"/>
</dbReference>
<dbReference type="InterPro" id="IPR036803">
    <property type="entry name" value="Porphobilinogen_deaminase_C_sf"/>
</dbReference>
<dbReference type="NCBIfam" id="TIGR00212">
    <property type="entry name" value="hemC"/>
    <property type="match status" value="1"/>
</dbReference>
<dbReference type="PANTHER" id="PTHR11557">
    <property type="entry name" value="PORPHOBILINOGEN DEAMINASE"/>
    <property type="match status" value="1"/>
</dbReference>
<dbReference type="PANTHER" id="PTHR11557:SF0">
    <property type="entry name" value="PORPHOBILINOGEN DEAMINASE"/>
    <property type="match status" value="1"/>
</dbReference>
<dbReference type="Pfam" id="PF01379">
    <property type="entry name" value="Porphobil_deam"/>
    <property type="match status" value="1"/>
</dbReference>
<dbReference type="Pfam" id="PF03900">
    <property type="entry name" value="Porphobil_deamC"/>
    <property type="match status" value="1"/>
</dbReference>
<dbReference type="PIRSF" id="PIRSF001438">
    <property type="entry name" value="4pyrrol_synth_OHMeBilane_synth"/>
    <property type="match status" value="1"/>
</dbReference>
<dbReference type="PRINTS" id="PR00151">
    <property type="entry name" value="PORPHBDMNASE"/>
</dbReference>
<dbReference type="SUPFAM" id="SSF53850">
    <property type="entry name" value="Periplasmic binding protein-like II"/>
    <property type="match status" value="1"/>
</dbReference>
<dbReference type="SUPFAM" id="SSF54782">
    <property type="entry name" value="Porphobilinogen deaminase (hydroxymethylbilane synthase), C-terminal domain"/>
    <property type="match status" value="1"/>
</dbReference>
<dbReference type="PROSITE" id="PS00533">
    <property type="entry name" value="PORPHOBILINOGEN_DEAM"/>
    <property type="match status" value="1"/>
</dbReference>
<organism>
    <name type="scientific">Pseudomonas putida (strain ATCC 47054 / DSM 6125 / CFBP 8728 / NCIMB 11950 / KT2440)</name>
    <dbReference type="NCBI Taxonomy" id="160488"/>
    <lineage>
        <taxon>Bacteria</taxon>
        <taxon>Pseudomonadati</taxon>
        <taxon>Pseudomonadota</taxon>
        <taxon>Gammaproteobacteria</taxon>
        <taxon>Pseudomonadales</taxon>
        <taxon>Pseudomonadaceae</taxon>
        <taxon>Pseudomonas</taxon>
    </lineage>
</organism>
<protein>
    <recommendedName>
        <fullName evidence="1">Porphobilinogen deaminase</fullName>
        <shortName evidence="1">PBG</shortName>
        <ecNumber evidence="1">2.5.1.61</ecNumber>
    </recommendedName>
    <alternativeName>
        <fullName evidence="1">Hydroxymethylbilane synthase</fullName>
        <shortName evidence="1">HMBS</shortName>
    </alternativeName>
    <alternativeName>
        <fullName evidence="1">Pre-uroporphyrinogen synthase</fullName>
    </alternativeName>
</protein>
<feature type="chain" id="PRO_0000142975" description="Porphobilinogen deaminase">
    <location>
        <begin position="1"/>
        <end position="313"/>
    </location>
</feature>
<feature type="modified residue" description="S-(dipyrrolylmethanemethyl)cysteine" evidence="1">
    <location>
        <position position="242"/>
    </location>
</feature>
<gene>
    <name evidence="1" type="primary">hemC</name>
    <name type="ordered locus">PP_0186</name>
</gene>
<name>HEM3_PSEPK</name>
<accession>Q88RE5</accession>
<proteinExistence type="inferred from homology"/>
<keyword id="KW-0627">Porphyrin biosynthesis</keyword>
<keyword id="KW-1185">Reference proteome</keyword>
<keyword id="KW-0808">Transferase</keyword>
<sequence length="313" mass="33440">MSTREIRIATRKSALALWQAEYVKARLEQAHTGLQVTLVPMVSRGDKLLDAPLAKIGGKGLFVKELETALLDNEADIAVHSMKDVPMDFPEGLGLYCICEREDPRDAFVSNTFDSLEALPAGSIVGTSSLRRQAQLLARRPDLQIRFLRGNVNTRLAKLDAGEYDAIILAAAGLIRLGFEDRITSTISVDDSLPAGGQGAVGIECRSADVEIHALLAPLHHVDTADRVIAERALNKRLNGGCQVPIACYAVLEGDQLWLRGLVGQPSGGTLLVADARAPRAAAEALGVQVAEDLLGQGAEAILKEVYGEAGHP</sequence>
<evidence type="ECO:0000255" key="1">
    <source>
        <dbReference type="HAMAP-Rule" id="MF_00260"/>
    </source>
</evidence>
<reference key="1">
    <citation type="journal article" date="2002" name="Environ. Microbiol.">
        <title>Complete genome sequence and comparative analysis of the metabolically versatile Pseudomonas putida KT2440.</title>
        <authorList>
            <person name="Nelson K.E."/>
            <person name="Weinel C."/>
            <person name="Paulsen I.T."/>
            <person name="Dodson R.J."/>
            <person name="Hilbert H."/>
            <person name="Martins dos Santos V.A.P."/>
            <person name="Fouts D.E."/>
            <person name="Gill S.R."/>
            <person name="Pop M."/>
            <person name="Holmes M."/>
            <person name="Brinkac L.M."/>
            <person name="Beanan M.J."/>
            <person name="DeBoy R.T."/>
            <person name="Daugherty S.C."/>
            <person name="Kolonay J.F."/>
            <person name="Madupu R."/>
            <person name="Nelson W.C."/>
            <person name="White O."/>
            <person name="Peterson J.D."/>
            <person name="Khouri H.M."/>
            <person name="Hance I."/>
            <person name="Chris Lee P."/>
            <person name="Holtzapple E.K."/>
            <person name="Scanlan D."/>
            <person name="Tran K."/>
            <person name="Moazzez A."/>
            <person name="Utterback T.R."/>
            <person name="Rizzo M."/>
            <person name="Lee K."/>
            <person name="Kosack D."/>
            <person name="Moestl D."/>
            <person name="Wedler H."/>
            <person name="Lauber J."/>
            <person name="Stjepandic D."/>
            <person name="Hoheisel J."/>
            <person name="Straetz M."/>
            <person name="Heim S."/>
            <person name="Kiewitz C."/>
            <person name="Eisen J.A."/>
            <person name="Timmis K.N."/>
            <person name="Duesterhoeft A."/>
            <person name="Tuemmler B."/>
            <person name="Fraser C.M."/>
        </authorList>
    </citation>
    <scope>NUCLEOTIDE SEQUENCE [LARGE SCALE GENOMIC DNA]</scope>
    <source>
        <strain>ATCC 47054 / DSM 6125 / CFBP 8728 / NCIMB 11950 / KT2440</strain>
    </source>
</reference>
<comment type="function">
    <text evidence="1">Tetrapolymerization of the monopyrrole PBG into the hydroxymethylbilane pre-uroporphyrinogen in several discrete steps.</text>
</comment>
<comment type="catalytic activity">
    <reaction evidence="1">
        <text>4 porphobilinogen + H2O = hydroxymethylbilane + 4 NH4(+)</text>
        <dbReference type="Rhea" id="RHEA:13185"/>
        <dbReference type="ChEBI" id="CHEBI:15377"/>
        <dbReference type="ChEBI" id="CHEBI:28938"/>
        <dbReference type="ChEBI" id="CHEBI:57845"/>
        <dbReference type="ChEBI" id="CHEBI:58126"/>
        <dbReference type="EC" id="2.5.1.61"/>
    </reaction>
</comment>
<comment type="cofactor">
    <cofactor evidence="1">
        <name>dipyrromethane</name>
        <dbReference type="ChEBI" id="CHEBI:60342"/>
    </cofactor>
    <text evidence="1">Binds 1 dipyrromethane group covalently.</text>
</comment>
<comment type="pathway">
    <text evidence="1">Porphyrin-containing compound metabolism; protoporphyrin-IX biosynthesis; coproporphyrinogen-III from 5-aminolevulinate: step 2/4.</text>
</comment>
<comment type="subunit">
    <text evidence="1">Monomer.</text>
</comment>
<comment type="miscellaneous">
    <text evidence="1">The porphobilinogen subunits are added to the dipyrromethane group.</text>
</comment>
<comment type="similarity">
    <text evidence="1">Belongs to the HMBS family.</text>
</comment>